<name>RS8_DANRE</name>
<gene>
    <name type="primary">rps8</name>
</gene>
<reference key="1">
    <citation type="journal article" date="2004" name="PLoS Biol.">
        <title>Many ribosomal protein genes are cancer genes in zebrafish.</title>
        <authorList>
            <person name="Amsterdam A."/>
            <person name="Sadler K.C."/>
            <person name="Lai K."/>
            <person name="Farrington S."/>
            <person name="Bronson R.T."/>
            <person name="Lees J.A."/>
            <person name="Hopkins N."/>
        </authorList>
    </citation>
    <scope>NUCLEOTIDE SEQUENCE [MRNA]</scope>
</reference>
<reference key="2">
    <citation type="submission" date="2004-07" db="EMBL/GenBank/DDBJ databases">
        <authorList>
            <consortium name="NIH - Zebrafish Gene Collection (ZGC) project"/>
        </authorList>
    </citation>
    <scope>NUCLEOTIDE SEQUENCE [LARGE SCALE MRNA]</scope>
    <source>
        <tissue>Eye</tissue>
    </source>
</reference>
<dbReference type="EMBL" id="AY561509">
    <property type="protein sequence ID" value="AAS66962.1"/>
    <property type="molecule type" value="mRNA"/>
</dbReference>
<dbReference type="EMBL" id="BC076163">
    <property type="protein sequence ID" value="AAH76163.1"/>
    <property type="molecule type" value="mRNA"/>
</dbReference>
<dbReference type="RefSeq" id="NP_999958.1">
    <property type="nucleotide sequence ID" value="NM_214793.1"/>
</dbReference>
<dbReference type="PDB" id="7OYA">
    <property type="method" value="EM"/>
    <property type="resolution" value="3.20 A"/>
    <property type="chains" value="I2=1-208"/>
</dbReference>
<dbReference type="PDB" id="7OYB">
    <property type="method" value="EM"/>
    <property type="resolution" value="2.40 A"/>
    <property type="chains" value="I2=1-208"/>
</dbReference>
<dbReference type="PDBsum" id="7OYA"/>
<dbReference type="PDBsum" id="7OYB"/>
<dbReference type="EMDB" id="EMD-13111"/>
<dbReference type="EMDB" id="EMD-13112"/>
<dbReference type="SMR" id="P62247"/>
<dbReference type="FunCoup" id="P62247">
    <property type="interactions" value="2553"/>
</dbReference>
<dbReference type="STRING" id="7955.ENSDARP00000072874"/>
<dbReference type="PaxDb" id="7955-ENSDARP00000072874"/>
<dbReference type="Ensembl" id="ENSDART00000078412">
    <property type="protein sequence ID" value="ENSDARP00000072874"/>
    <property type="gene ID" value="ENSDARG00000055996"/>
</dbReference>
<dbReference type="GeneID" id="407690"/>
<dbReference type="KEGG" id="dre:407690"/>
<dbReference type="AGR" id="ZFIN:ZDB-GENE-030131-8626"/>
<dbReference type="CTD" id="407690"/>
<dbReference type="ZFIN" id="ZDB-GENE-030131-8626">
    <property type="gene designation" value="rps8a"/>
</dbReference>
<dbReference type="eggNOG" id="KOG3283">
    <property type="taxonomic scope" value="Eukaryota"/>
</dbReference>
<dbReference type="HOGENOM" id="CLU_080597_1_1_1"/>
<dbReference type="InParanoid" id="P62247"/>
<dbReference type="OMA" id="QRPHYRK"/>
<dbReference type="OrthoDB" id="1703270at2759"/>
<dbReference type="PhylomeDB" id="P62247"/>
<dbReference type="TreeFam" id="TF300041"/>
<dbReference type="PRO" id="PR:P62247"/>
<dbReference type="Proteomes" id="UP000000437">
    <property type="component" value="Chromosome 2"/>
</dbReference>
<dbReference type="Bgee" id="ENSDARG00000055996">
    <property type="expression patterns" value="Expressed in camera-type eye and 23 other cell types or tissues"/>
</dbReference>
<dbReference type="GO" id="GO:0022627">
    <property type="term" value="C:cytosolic small ribosomal subunit"/>
    <property type="evidence" value="ECO:0000318"/>
    <property type="project" value="GO_Central"/>
</dbReference>
<dbReference type="GO" id="GO:0016020">
    <property type="term" value="C:membrane"/>
    <property type="evidence" value="ECO:0007669"/>
    <property type="project" value="UniProtKB-SubCell"/>
</dbReference>
<dbReference type="GO" id="GO:0005730">
    <property type="term" value="C:nucleolus"/>
    <property type="evidence" value="ECO:0007669"/>
    <property type="project" value="UniProtKB-SubCell"/>
</dbReference>
<dbReference type="GO" id="GO:0032040">
    <property type="term" value="C:small-subunit processome"/>
    <property type="evidence" value="ECO:0000250"/>
    <property type="project" value="UniProtKB"/>
</dbReference>
<dbReference type="GO" id="GO:0003735">
    <property type="term" value="F:structural constituent of ribosome"/>
    <property type="evidence" value="ECO:0000318"/>
    <property type="project" value="GO_Central"/>
</dbReference>
<dbReference type="GO" id="GO:0043009">
    <property type="term" value="P:chordate embryonic development"/>
    <property type="evidence" value="ECO:0000315"/>
    <property type="project" value="ZFIN"/>
</dbReference>
<dbReference type="GO" id="GO:0000462">
    <property type="term" value="P:maturation of SSU-rRNA from tricistronic rRNA transcript (SSU-rRNA, 5.8S rRNA, LSU-rRNA)"/>
    <property type="evidence" value="ECO:0000318"/>
    <property type="project" value="GO_Central"/>
</dbReference>
<dbReference type="GO" id="GO:0051726">
    <property type="term" value="P:regulation of cell cycle"/>
    <property type="evidence" value="ECO:0000315"/>
    <property type="project" value="ZFIN"/>
</dbReference>
<dbReference type="GO" id="GO:0042274">
    <property type="term" value="P:ribosomal small subunit biogenesis"/>
    <property type="evidence" value="ECO:0000250"/>
    <property type="project" value="UniProtKB"/>
</dbReference>
<dbReference type="GO" id="GO:0006412">
    <property type="term" value="P:translation"/>
    <property type="evidence" value="ECO:0007669"/>
    <property type="project" value="InterPro"/>
</dbReference>
<dbReference type="CDD" id="cd11380">
    <property type="entry name" value="Ribosomal_S8e_like"/>
    <property type="match status" value="1"/>
</dbReference>
<dbReference type="FunFam" id="3.10.290.70:FF:000004">
    <property type="entry name" value="40S ribosomal protein S8"/>
    <property type="match status" value="1"/>
</dbReference>
<dbReference type="FunFam" id="3.10.290.70:FF:000005">
    <property type="entry name" value="40S ribosomal protein S8"/>
    <property type="match status" value="1"/>
</dbReference>
<dbReference type="Gene3D" id="3.10.290.70">
    <property type="match status" value="2"/>
</dbReference>
<dbReference type="InterPro" id="IPR001047">
    <property type="entry name" value="Ribosomal_eS8"/>
</dbReference>
<dbReference type="InterPro" id="IPR018283">
    <property type="entry name" value="Ribosomal_eS8_CS"/>
</dbReference>
<dbReference type="InterPro" id="IPR022309">
    <property type="entry name" value="Ribosomal_Se8/biogenesis_NSA2"/>
</dbReference>
<dbReference type="NCBIfam" id="TIGR00307">
    <property type="entry name" value="eS8"/>
    <property type="match status" value="1"/>
</dbReference>
<dbReference type="PANTHER" id="PTHR10394">
    <property type="entry name" value="40S RIBOSOMAL PROTEIN S8"/>
    <property type="match status" value="1"/>
</dbReference>
<dbReference type="Pfam" id="PF01201">
    <property type="entry name" value="Ribosomal_S8e"/>
    <property type="match status" value="1"/>
</dbReference>
<dbReference type="PROSITE" id="PS01193">
    <property type="entry name" value="RIBOSOMAL_S8E"/>
    <property type="match status" value="1"/>
</dbReference>
<proteinExistence type="evidence at protein level"/>
<organism>
    <name type="scientific">Danio rerio</name>
    <name type="common">Zebrafish</name>
    <name type="synonym">Brachydanio rerio</name>
    <dbReference type="NCBI Taxonomy" id="7955"/>
    <lineage>
        <taxon>Eukaryota</taxon>
        <taxon>Metazoa</taxon>
        <taxon>Chordata</taxon>
        <taxon>Craniata</taxon>
        <taxon>Vertebrata</taxon>
        <taxon>Euteleostomi</taxon>
        <taxon>Actinopterygii</taxon>
        <taxon>Neopterygii</taxon>
        <taxon>Teleostei</taxon>
        <taxon>Ostariophysi</taxon>
        <taxon>Cypriniformes</taxon>
        <taxon>Danionidae</taxon>
        <taxon>Danioninae</taxon>
        <taxon>Danio</taxon>
    </lineage>
</organism>
<protein>
    <recommendedName>
        <fullName evidence="4">Small ribosomal subunit protein eS8</fullName>
    </recommendedName>
    <alternativeName>
        <fullName>40S ribosomal protein S8</fullName>
    </alternativeName>
</protein>
<keyword id="KW-0002">3D-structure</keyword>
<keyword id="KW-0963">Cytoplasm</keyword>
<keyword id="KW-0449">Lipoprotein</keyword>
<keyword id="KW-0472">Membrane</keyword>
<keyword id="KW-0539">Nucleus</keyword>
<keyword id="KW-1185">Reference proteome</keyword>
<keyword id="KW-0687">Ribonucleoprotein</keyword>
<keyword id="KW-0689">Ribosomal protein</keyword>
<evidence type="ECO:0000250" key="1"/>
<evidence type="ECO:0000250" key="2">
    <source>
        <dbReference type="UniProtKB" id="P62241"/>
    </source>
</evidence>
<evidence type="ECO:0000256" key="3">
    <source>
        <dbReference type="SAM" id="MobiDB-lite"/>
    </source>
</evidence>
<evidence type="ECO:0000305" key="4"/>
<comment type="function">
    <text evidence="2">Component of the small ribosomal subunit. The ribosome is a large ribonucleoprotein complex responsible for the synthesis of proteins in the cell. Part of the small subunit (SSU) processome, first precursor of the small eukaryotic ribosomal subunit. During the assembly of the SSU processome in the nucleolus, many ribosome biogenesis factors, an RNA chaperone and ribosomal proteins associate with the nascent pre-rRNA and work in concert to generate RNA folding, modifications, rearrangements and cleavage as well as targeted degradation of pre-ribosomal RNA by the RNA exosome.</text>
</comment>
<comment type="subunit">
    <text evidence="2">Component of the small ribosomal subunit. Identified in a IGF2BP1-dependent mRNP granule complex containing untranslated mRNAs. Part of the small subunit (SSU) processome, composed of more than 70 proteins and the RNA chaperone small nucleolar RNA (snoRNA) U3.</text>
</comment>
<comment type="subcellular location">
    <subcellularLocation>
        <location evidence="2">Cytoplasm</location>
    </subcellularLocation>
    <subcellularLocation>
        <location evidence="2">Membrane</location>
        <topology evidence="2">Lipid-anchor</topology>
    </subcellularLocation>
    <subcellularLocation>
        <location evidence="2">Nucleus</location>
        <location evidence="2">Nucleolus</location>
    </subcellularLocation>
    <text evidence="2">Localized in cytoplasmic mRNP granules containing untranslated mRNAs.</text>
</comment>
<comment type="similarity">
    <text evidence="4">Belongs to the eukaryotic ribosomal protein eS8 family.</text>
</comment>
<sequence length="208" mass="24093">MGISRDNWHKRRRTGGKRKPVHKKRKYELGRPAANTKIGPRRIHTIRVRGGNKKYRALRLDVGNFSWGSECCTRKTRIIDVVYNASNNELVRTKTLVKNCVVLVDSTPYRQWYESHYALPLGRKKGAKLTPEEEEILNKKRSKKVQKKFTLRRKTAKISPLLEEQFLQGKLLACISSRPGQCGRADGYVLEGKELEFYLRKIKAKKGK</sequence>
<feature type="initiator methionine" description="Removed" evidence="1">
    <location>
        <position position="1"/>
    </location>
</feature>
<feature type="chain" id="PRO_0000122243" description="Small ribosomal subunit protein eS8">
    <location>
        <begin position="2"/>
        <end position="208"/>
    </location>
</feature>
<feature type="region of interest" description="Disordered" evidence="3">
    <location>
        <begin position="1"/>
        <end position="27"/>
    </location>
</feature>
<feature type="compositionally biased region" description="Basic residues" evidence="3">
    <location>
        <begin position="8"/>
        <end position="26"/>
    </location>
</feature>
<accession>P62247</accession>